<comment type="function">
    <text evidence="1">Catalyzes the NADPH-dependent reduction of 7-cyano-7-deazaguanine (preQ0) to 7-aminomethyl-7-deazaguanine (preQ1).</text>
</comment>
<comment type="catalytic activity">
    <reaction evidence="1">
        <text>7-aminomethyl-7-carbaguanine + 2 NADP(+) = 7-cyano-7-deazaguanine + 2 NADPH + 3 H(+)</text>
        <dbReference type="Rhea" id="RHEA:13409"/>
        <dbReference type="ChEBI" id="CHEBI:15378"/>
        <dbReference type="ChEBI" id="CHEBI:45075"/>
        <dbReference type="ChEBI" id="CHEBI:57783"/>
        <dbReference type="ChEBI" id="CHEBI:58349"/>
        <dbReference type="ChEBI" id="CHEBI:58703"/>
        <dbReference type="EC" id="1.7.1.13"/>
    </reaction>
</comment>
<comment type="pathway">
    <text evidence="1">tRNA modification; tRNA-queuosine biosynthesis.</text>
</comment>
<comment type="subunit">
    <text evidence="1">Homodimer.</text>
</comment>
<comment type="subcellular location">
    <subcellularLocation>
        <location evidence="1">Cytoplasm</location>
    </subcellularLocation>
</comment>
<comment type="similarity">
    <text evidence="1">Belongs to the GTP cyclohydrolase I family. QueF type 2 subfamily.</text>
</comment>
<keyword id="KW-0963">Cytoplasm</keyword>
<keyword id="KW-0521">NADP</keyword>
<keyword id="KW-0560">Oxidoreductase</keyword>
<keyword id="KW-0671">Queuosine biosynthesis</keyword>
<reference key="1">
    <citation type="journal article" date="2008" name="BMC Genomics">
        <title>The genome of Aeromonas salmonicida subsp. salmonicida A449: insights into the evolution of a fish pathogen.</title>
        <authorList>
            <person name="Reith M.E."/>
            <person name="Singh R.K."/>
            <person name="Curtis B."/>
            <person name="Boyd J.M."/>
            <person name="Bouevitch A."/>
            <person name="Kimball J."/>
            <person name="Munholland J."/>
            <person name="Murphy C."/>
            <person name="Sarty D."/>
            <person name="Williams J."/>
            <person name="Nash J.H."/>
            <person name="Johnson S.C."/>
            <person name="Brown L.L."/>
        </authorList>
    </citation>
    <scope>NUCLEOTIDE SEQUENCE [LARGE SCALE GENOMIC DNA]</scope>
    <source>
        <strain>A449</strain>
    </source>
</reference>
<evidence type="ECO:0000255" key="1">
    <source>
        <dbReference type="HAMAP-Rule" id="MF_00817"/>
    </source>
</evidence>
<accession>A4SQJ9</accession>
<feature type="chain" id="PRO_1000193211" description="NADPH-dependent 7-cyano-7-deazaguanine reductase">
    <location>
        <begin position="1"/>
        <end position="282"/>
    </location>
</feature>
<feature type="active site" description="Thioimide intermediate" evidence="1">
    <location>
        <position position="190"/>
    </location>
</feature>
<feature type="active site" description="Proton donor" evidence="1">
    <location>
        <position position="197"/>
    </location>
</feature>
<feature type="binding site" evidence="1">
    <location>
        <begin position="90"/>
        <end position="92"/>
    </location>
    <ligand>
        <name>substrate</name>
    </ligand>
</feature>
<feature type="binding site" evidence="1">
    <location>
        <begin position="92"/>
        <end position="93"/>
    </location>
    <ligand>
        <name>NADPH</name>
        <dbReference type="ChEBI" id="CHEBI:57783"/>
    </ligand>
</feature>
<feature type="binding site" evidence="1">
    <location>
        <begin position="229"/>
        <end position="230"/>
    </location>
    <ligand>
        <name>substrate</name>
    </ligand>
</feature>
<feature type="binding site" evidence="1">
    <location>
        <begin position="258"/>
        <end position="259"/>
    </location>
    <ligand>
        <name>NADPH</name>
        <dbReference type="ChEBI" id="CHEBI:57783"/>
    </ligand>
</feature>
<gene>
    <name evidence="1" type="primary">queF</name>
    <name type="ordered locus">ASA_3178</name>
</gene>
<sequence length="282" mass="31607">MSKQEKYAGASALQGLSLGQQSAYISQYSPALLQPVPRSLNRDDLGLTGELPFQGCDVWTLYELSWLNARGKPMVAVGEVSVPAVSANLIESKSFKLYLNSFNQTRCDSLEAVQAMLVKDLSACAGSEVSVTLFPLAQAPHHIAALPGECIDEQDIEVDCYEFDANLLQGAAGNDEVEETLHSHLLKSNCLVTSQPDWGSVVIHYRGPRLDREKLLRYLISFRQHNEFHEQCIERIFTDLKLLCHPSQLTVYARYTRRGGLDINPFRSDWELPPTNLRLIRQ</sequence>
<protein>
    <recommendedName>
        <fullName evidence="1">NADPH-dependent 7-cyano-7-deazaguanine reductase</fullName>
        <ecNumber evidence="1">1.7.1.13</ecNumber>
    </recommendedName>
    <alternativeName>
        <fullName evidence="1">7-cyano-7-carbaguanine reductase</fullName>
    </alternativeName>
    <alternativeName>
        <fullName evidence="1">NADPH-dependent nitrile oxidoreductase</fullName>
    </alternativeName>
    <alternativeName>
        <fullName evidence="1">PreQ(0) reductase</fullName>
    </alternativeName>
</protein>
<dbReference type="EC" id="1.7.1.13" evidence="1"/>
<dbReference type="EMBL" id="CP000644">
    <property type="protein sequence ID" value="ABO91171.1"/>
    <property type="molecule type" value="Genomic_DNA"/>
</dbReference>
<dbReference type="RefSeq" id="WP_005312019.1">
    <property type="nucleotide sequence ID" value="NC_009348.1"/>
</dbReference>
<dbReference type="SMR" id="A4SQJ9"/>
<dbReference type="STRING" id="29491.GCA_000820065_03558"/>
<dbReference type="KEGG" id="asa:ASA_3178"/>
<dbReference type="eggNOG" id="COG0780">
    <property type="taxonomic scope" value="Bacteria"/>
</dbReference>
<dbReference type="eggNOG" id="COG2904">
    <property type="taxonomic scope" value="Bacteria"/>
</dbReference>
<dbReference type="HOGENOM" id="CLU_054738_0_0_6"/>
<dbReference type="UniPathway" id="UPA00392"/>
<dbReference type="Proteomes" id="UP000000225">
    <property type="component" value="Chromosome"/>
</dbReference>
<dbReference type="GO" id="GO:0005737">
    <property type="term" value="C:cytoplasm"/>
    <property type="evidence" value="ECO:0007669"/>
    <property type="project" value="UniProtKB-SubCell"/>
</dbReference>
<dbReference type="GO" id="GO:0033739">
    <property type="term" value="F:preQ1 synthase activity"/>
    <property type="evidence" value="ECO:0007669"/>
    <property type="project" value="UniProtKB-UniRule"/>
</dbReference>
<dbReference type="GO" id="GO:0008616">
    <property type="term" value="P:queuosine biosynthetic process"/>
    <property type="evidence" value="ECO:0007669"/>
    <property type="project" value="UniProtKB-UniRule"/>
</dbReference>
<dbReference type="GO" id="GO:0006400">
    <property type="term" value="P:tRNA modification"/>
    <property type="evidence" value="ECO:0007669"/>
    <property type="project" value="UniProtKB-UniRule"/>
</dbReference>
<dbReference type="Gene3D" id="3.30.1130.10">
    <property type="match status" value="2"/>
</dbReference>
<dbReference type="HAMAP" id="MF_00817">
    <property type="entry name" value="QueF_type2"/>
    <property type="match status" value="1"/>
</dbReference>
<dbReference type="InterPro" id="IPR043133">
    <property type="entry name" value="GTP-CH-I_C/QueF"/>
</dbReference>
<dbReference type="InterPro" id="IPR050084">
    <property type="entry name" value="NADPH_dep_7-cyano-7-deazaG_red"/>
</dbReference>
<dbReference type="InterPro" id="IPR029500">
    <property type="entry name" value="QueF"/>
</dbReference>
<dbReference type="InterPro" id="IPR029139">
    <property type="entry name" value="QueF_N"/>
</dbReference>
<dbReference type="InterPro" id="IPR016428">
    <property type="entry name" value="QueF_type2"/>
</dbReference>
<dbReference type="NCBIfam" id="TIGR03138">
    <property type="entry name" value="QueF"/>
    <property type="match status" value="1"/>
</dbReference>
<dbReference type="PANTHER" id="PTHR34354">
    <property type="entry name" value="NADPH-DEPENDENT 7-CYANO-7-DEAZAGUANINE REDUCTASE"/>
    <property type="match status" value="1"/>
</dbReference>
<dbReference type="PANTHER" id="PTHR34354:SF1">
    <property type="entry name" value="NADPH-DEPENDENT 7-CYANO-7-DEAZAGUANINE REDUCTASE"/>
    <property type="match status" value="1"/>
</dbReference>
<dbReference type="Pfam" id="PF14489">
    <property type="entry name" value="QueF"/>
    <property type="match status" value="1"/>
</dbReference>
<dbReference type="Pfam" id="PF14819">
    <property type="entry name" value="QueF_N"/>
    <property type="match status" value="1"/>
</dbReference>
<dbReference type="PIRSF" id="PIRSF004750">
    <property type="entry name" value="Nitrile_oxidored_YqcD_prd"/>
    <property type="match status" value="1"/>
</dbReference>
<dbReference type="SUPFAM" id="SSF55620">
    <property type="entry name" value="Tetrahydrobiopterin biosynthesis enzymes-like"/>
    <property type="match status" value="1"/>
</dbReference>
<proteinExistence type="inferred from homology"/>
<name>QUEF_AERS4</name>
<organism>
    <name type="scientific">Aeromonas salmonicida (strain A449)</name>
    <dbReference type="NCBI Taxonomy" id="382245"/>
    <lineage>
        <taxon>Bacteria</taxon>
        <taxon>Pseudomonadati</taxon>
        <taxon>Pseudomonadota</taxon>
        <taxon>Gammaproteobacteria</taxon>
        <taxon>Aeromonadales</taxon>
        <taxon>Aeromonadaceae</taxon>
        <taxon>Aeromonas</taxon>
    </lineage>
</organism>